<sequence>MLTLKLFVYTVVIFFVSLFIFGFLSNDPGRNPGRDE</sequence>
<reference key="1">
    <citation type="journal article" date="2003" name="Mol. Biol. Evol.">
        <title>Analysis of the Amborella trichopoda chloroplast genome sequence suggests that Amborella is not a basal angiosperm.</title>
        <authorList>
            <person name="Goremykin V.V."/>
            <person name="Hirsch-Ernst K.I."/>
            <person name="Wolfl S."/>
            <person name="Hellwig F.H."/>
        </authorList>
    </citation>
    <scope>NUCLEOTIDE SEQUENCE [LARGE SCALE GENOMIC DNA]</scope>
</reference>
<feature type="chain" id="PRO_0000219615" description="Photosystem II reaction center protein I">
    <location>
        <begin position="1"/>
        <end position="36"/>
    </location>
</feature>
<feature type="transmembrane region" description="Helical" evidence="1">
    <location>
        <begin position="4"/>
        <end position="24"/>
    </location>
</feature>
<evidence type="ECO:0000255" key="1">
    <source>
        <dbReference type="HAMAP-Rule" id="MF_01316"/>
    </source>
</evidence>
<gene>
    <name evidence="1" type="primary">psbI</name>
</gene>
<organism>
    <name type="scientific">Amborella trichopoda</name>
    <dbReference type="NCBI Taxonomy" id="13333"/>
    <lineage>
        <taxon>Eukaryota</taxon>
        <taxon>Viridiplantae</taxon>
        <taxon>Streptophyta</taxon>
        <taxon>Embryophyta</taxon>
        <taxon>Tracheophyta</taxon>
        <taxon>Spermatophyta</taxon>
        <taxon>Magnoliopsida</taxon>
        <taxon>Amborellales</taxon>
        <taxon>Amborellaceae</taxon>
        <taxon>Amborella</taxon>
    </lineage>
</organism>
<dbReference type="EMBL" id="AJ506156">
    <property type="protein sequence ID" value="CAD45093.1"/>
    <property type="molecule type" value="Genomic_DNA"/>
</dbReference>
<dbReference type="RefSeq" id="NP_904083.1">
    <property type="nucleotide sequence ID" value="NC_005086.1"/>
</dbReference>
<dbReference type="SMR" id="Q70Y13"/>
<dbReference type="STRING" id="13333.Q70Y13"/>
<dbReference type="GeneID" id="2597961"/>
<dbReference type="KEGG" id="atr:2597961"/>
<dbReference type="OrthoDB" id="1855836at2759"/>
<dbReference type="Proteomes" id="UP000017836">
    <property type="component" value="Chloroplast"/>
</dbReference>
<dbReference type="GO" id="GO:0009535">
    <property type="term" value="C:chloroplast thylakoid membrane"/>
    <property type="evidence" value="ECO:0007669"/>
    <property type="project" value="UniProtKB-SubCell"/>
</dbReference>
<dbReference type="GO" id="GO:0009539">
    <property type="term" value="C:photosystem II reaction center"/>
    <property type="evidence" value="ECO:0007669"/>
    <property type="project" value="InterPro"/>
</dbReference>
<dbReference type="GO" id="GO:0015979">
    <property type="term" value="P:photosynthesis"/>
    <property type="evidence" value="ECO:0007669"/>
    <property type="project" value="UniProtKB-UniRule"/>
</dbReference>
<dbReference type="HAMAP" id="MF_01316">
    <property type="entry name" value="PSII_PsbI"/>
    <property type="match status" value="1"/>
</dbReference>
<dbReference type="InterPro" id="IPR003686">
    <property type="entry name" value="PSII_PsbI"/>
</dbReference>
<dbReference type="InterPro" id="IPR037271">
    <property type="entry name" value="PSII_PsbI_sf"/>
</dbReference>
<dbReference type="NCBIfam" id="NF002735">
    <property type="entry name" value="PRK02655.1"/>
    <property type="match status" value="1"/>
</dbReference>
<dbReference type="PANTHER" id="PTHR35772">
    <property type="entry name" value="PHOTOSYSTEM II REACTION CENTER PROTEIN I"/>
    <property type="match status" value="1"/>
</dbReference>
<dbReference type="PANTHER" id="PTHR35772:SF1">
    <property type="entry name" value="PHOTOSYSTEM II REACTION CENTER PROTEIN I"/>
    <property type="match status" value="1"/>
</dbReference>
<dbReference type="Pfam" id="PF02532">
    <property type="entry name" value="PsbI"/>
    <property type="match status" value="1"/>
</dbReference>
<dbReference type="SUPFAM" id="SSF161041">
    <property type="entry name" value="Photosystem II reaction center protein I, PsbI"/>
    <property type="match status" value="1"/>
</dbReference>
<accession>Q70Y13</accession>
<geneLocation type="chloroplast"/>
<protein>
    <recommendedName>
        <fullName evidence="1">Photosystem II reaction center protein I</fullName>
        <shortName evidence="1">PSII-I</shortName>
    </recommendedName>
    <alternativeName>
        <fullName evidence="1">PSII 4.8 kDa protein</fullName>
    </alternativeName>
</protein>
<name>PSBI_AMBTC</name>
<proteinExistence type="inferred from homology"/>
<comment type="function">
    <text evidence="1">One of the components of the core complex of photosystem II (PSII), required for its stability and/or assembly. PSII is a light-driven water:plastoquinone oxidoreductase that uses light energy to abstract electrons from H(2)O, generating O(2) and a proton gradient subsequently used for ATP formation. It consists of a core antenna complex that captures photons, and an electron transfer chain that converts photonic excitation into a charge separation.</text>
</comment>
<comment type="subunit">
    <text evidence="1">PSII is composed of 1 copy each of membrane proteins PsbA, PsbB, PsbC, PsbD, PsbE, PsbF, PsbH, PsbI, PsbJ, PsbK, PsbL, PsbM, PsbT, PsbX, PsbY, PsbZ, Psb30/Ycf12, at least 3 peripheral proteins of the oxygen-evolving complex and a large number of cofactors. It forms dimeric complexes.</text>
</comment>
<comment type="subcellular location">
    <subcellularLocation>
        <location evidence="1">Plastid</location>
        <location evidence="1">Chloroplast thylakoid membrane</location>
        <topology evidence="1">Single-pass membrane protein</topology>
    </subcellularLocation>
</comment>
<comment type="similarity">
    <text evidence="1">Belongs to the PsbI family.</text>
</comment>
<keyword id="KW-0150">Chloroplast</keyword>
<keyword id="KW-0472">Membrane</keyword>
<keyword id="KW-0602">Photosynthesis</keyword>
<keyword id="KW-0604">Photosystem II</keyword>
<keyword id="KW-0934">Plastid</keyword>
<keyword id="KW-0674">Reaction center</keyword>
<keyword id="KW-1185">Reference proteome</keyword>
<keyword id="KW-0793">Thylakoid</keyword>
<keyword id="KW-0812">Transmembrane</keyword>
<keyword id="KW-1133">Transmembrane helix</keyword>